<reference key="1">
    <citation type="journal article" date="2004" name="Proc. Natl. Acad. Sci. U.S.A.">
        <title>The diploid genome sequence of Candida albicans.</title>
        <authorList>
            <person name="Jones T."/>
            <person name="Federspiel N.A."/>
            <person name="Chibana H."/>
            <person name="Dungan J."/>
            <person name="Kalman S."/>
            <person name="Magee B.B."/>
            <person name="Newport G."/>
            <person name="Thorstenson Y.R."/>
            <person name="Agabian N."/>
            <person name="Magee P.T."/>
            <person name="Davis R.W."/>
            <person name="Scherer S."/>
        </authorList>
    </citation>
    <scope>NUCLEOTIDE SEQUENCE [LARGE SCALE GENOMIC DNA]</scope>
    <source>
        <strain>SC5314 / ATCC MYA-2876</strain>
    </source>
</reference>
<reference key="2">
    <citation type="journal article" date="2007" name="Genome Biol.">
        <title>Assembly of the Candida albicans genome into sixteen supercontigs aligned on the eight chromosomes.</title>
        <authorList>
            <person name="van het Hoog M."/>
            <person name="Rast T.J."/>
            <person name="Martchenko M."/>
            <person name="Grindle S."/>
            <person name="Dignard D."/>
            <person name="Hogues H."/>
            <person name="Cuomo C."/>
            <person name="Berriman M."/>
            <person name="Scherer S."/>
            <person name="Magee B.B."/>
            <person name="Whiteway M."/>
            <person name="Chibana H."/>
            <person name="Nantel A."/>
            <person name="Magee P.T."/>
        </authorList>
    </citation>
    <scope>GENOME REANNOTATION</scope>
    <source>
        <strain>SC5314 / ATCC MYA-2876</strain>
    </source>
</reference>
<reference key="3">
    <citation type="journal article" date="2013" name="Genome Biol.">
        <title>Assembly of a phased diploid Candida albicans genome facilitates allele-specific measurements and provides a simple model for repeat and indel structure.</title>
        <authorList>
            <person name="Muzzey D."/>
            <person name="Schwartz K."/>
            <person name="Weissman J.S."/>
            <person name="Sherlock G."/>
        </authorList>
    </citation>
    <scope>NUCLEOTIDE SEQUENCE [LARGE SCALE GENOMIC DNA]</scope>
    <scope>GENOME REANNOTATION</scope>
    <source>
        <strain>SC5314 / ATCC MYA-2876</strain>
    </source>
</reference>
<reference key="4">
    <citation type="journal article" date="2004" name="Eukaryot. Cell">
        <title>Pmt-mediated O mannosylation stabilizes an essential component of the secretory apparatus, Sec20p, in Candida albicans.</title>
        <authorList>
            <person name="Weber Y."/>
            <person name="Prill S.K."/>
            <person name="Ernst J.F."/>
        </authorList>
    </citation>
    <scope>FUNCTION</scope>
</reference>
<reference key="5">
    <citation type="journal article" date="2005" name="Infect. Immun.">
        <title>Virulence of the fungal pathogen Candida albicans requires the five isoforms of protein mannosyltransferases.</title>
        <authorList>
            <person name="Rouabhia M."/>
            <person name="Schaller M."/>
            <person name="Corbucci C."/>
            <person name="Vecchiarelli A."/>
            <person name="Prill S.K."/>
            <person name="Giasson L."/>
            <person name="Ernst J.F."/>
        </authorList>
    </citation>
    <scope>DISRUPTION PHENOTYPE</scope>
    <scope>FUNCTION</scope>
</reference>
<reference key="6">
    <citation type="journal article" date="2005" name="Mol. Microbiol.">
        <title>PMT family of Candida albicans: five protein mannosyltransferase isoforms affect growth, morphogenesis and antifungal resistance.</title>
        <authorList>
            <person name="Prill S.K."/>
            <person name="Klinkert B."/>
            <person name="Timpel C."/>
            <person name="Gale C.A."/>
            <person name="Schroppel K."/>
            <person name="Ernst J.F."/>
        </authorList>
    </citation>
    <scope>IDENTIFICATION</scope>
    <scope>DISRUPTION PHENOTYPE</scope>
    <scope>INDUCTION</scope>
    <scope>FUNCTION</scope>
</reference>
<reference key="7">
    <citation type="journal article" date="2006" name="Antimicrob. Agents Chemother.">
        <title>Protein O-mannosyltransferase isoforms regulate biofilm formation in Candida albicans.</title>
        <authorList>
            <person name="Peltroche-Llacsahuanga H."/>
            <person name="Goyard S."/>
            <person name="d'Enfert C."/>
            <person name="Prill S.K."/>
            <person name="Ernst J.F."/>
        </authorList>
    </citation>
    <scope>DISRUPTION PHENOTYPE</scope>
    <scope>FUNCTION</scope>
</reference>
<reference key="8">
    <citation type="journal article" date="2011" name="Mol. Microbiol.">
        <title>Damage to the glycoshield activates PMT-directed O-mannosylation via the Msb2-Cek1 pathway in Candida albicans.</title>
        <authorList>
            <person name="Cantero P.D."/>
            <person name="Ernst J.F."/>
        </authorList>
    </citation>
    <scope>INDUCTION</scope>
</reference>
<reference key="9">
    <citation type="journal article" date="2013" name="Eukaryot. Cell">
        <title>Identification of genes upregulated by the transcription factor Bcr1 that are involved in impermeability, impenetrability, and drug resistance of Candida albicans a/alpha biofilms.</title>
        <authorList>
            <person name="Srikantha T."/>
            <person name="Daniels K.J."/>
            <person name="Pujol C."/>
            <person name="Kim E."/>
            <person name="Soll D.R."/>
        </authorList>
    </citation>
    <scope>INDUCTION</scope>
</reference>
<evidence type="ECO:0000250" key="1">
    <source>
        <dbReference type="UniProtKB" id="P33775"/>
    </source>
</evidence>
<evidence type="ECO:0000250" key="2">
    <source>
        <dbReference type="UniProtKB" id="P46971"/>
    </source>
</evidence>
<evidence type="ECO:0000255" key="3"/>
<evidence type="ECO:0000255" key="4">
    <source>
        <dbReference type="PROSITE-ProRule" id="PRU00131"/>
    </source>
</evidence>
<evidence type="ECO:0000255" key="5">
    <source>
        <dbReference type="PROSITE-ProRule" id="PRU00498"/>
    </source>
</evidence>
<evidence type="ECO:0000256" key="6">
    <source>
        <dbReference type="SAM" id="MobiDB-lite"/>
    </source>
</evidence>
<evidence type="ECO:0000269" key="7">
    <source>
    </source>
</evidence>
<evidence type="ECO:0000269" key="8">
    <source>
    </source>
</evidence>
<evidence type="ECO:0000269" key="9">
    <source>
    </source>
</evidence>
<evidence type="ECO:0000269" key="10">
    <source>
    </source>
</evidence>
<evidence type="ECO:0000269" key="11">
    <source>
    </source>
</evidence>
<evidence type="ECO:0000269" key="12">
    <source>
    </source>
</evidence>
<evidence type="ECO:0000303" key="13">
    <source>
    </source>
</evidence>
<evidence type="ECO:0000305" key="14"/>
<comment type="function">
    <text evidence="7 8 9 10">Protein mannosyltransferase (PMT) involved in hyphal growth and drug sensitivity. Transfers mannose from Dol-P-mannose to Ser or Thr residues on proteins. PMT1, PMT2 and PMT4 account for most of the protein-O-glycosylation activity, while PMT5 and PMT6 may specifically modulate a much narrower spectrum of target proteins. Accounts for the O-glycosylation of AXL2, responsible for bud site selection, as well as of the SEC20 t-SNARE component. O-glycosylation of SEC20 is essential for its stability. Required for biofilm formation.</text>
</comment>
<comment type="catalytic activity">
    <reaction evidence="1 13">
        <text>a di-trans,poly-cis-dolichyl beta-D-mannosyl phosphate + L-seryl-[protein] = 3-O-(alpha-D-mannosyl)-L-seryl-[protein] + a di-trans,poly-cis-dolichyl phosphate + H(+)</text>
        <dbReference type="Rhea" id="RHEA:17377"/>
        <dbReference type="Rhea" id="RHEA-COMP:9863"/>
        <dbReference type="Rhea" id="RHEA-COMP:13546"/>
        <dbReference type="Rhea" id="RHEA-COMP:19498"/>
        <dbReference type="Rhea" id="RHEA-COMP:19501"/>
        <dbReference type="ChEBI" id="CHEBI:15378"/>
        <dbReference type="ChEBI" id="CHEBI:29999"/>
        <dbReference type="ChEBI" id="CHEBI:57683"/>
        <dbReference type="ChEBI" id="CHEBI:58211"/>
        <dbReference type="ChEBI" id="CHEBI:137321"/>
        <dbReference type="EC" id="2.4.1.109"/>
    </reaction>
</comment>
<comment type="catalytic activity">
    <reaction evidence="1 13">
        <text>a di-trans,poly-cis-dolichyl beta-D-mannosyl phosphate + L-threonyl-[protein] = 3-O-(alpha-D-mannosyl)-L-threonyl-[protein] + a di-trans,poly-cis-dolichyl phosphate + H(+)</text>
        <dbReference type="Rhea" id="RHEA:53396"/>
        <dbReference type="Rhea" id="RHEA-COMP:11060"/>
        <dbReference type="Rhea" id="RHEA-COMP:13547"/>
        <dbReference type="Rhea" id="RHEA-COMP:19498"/>
        <dbReference type="Rhea" id="RHEA-COMP:19501"/>
        <dbReference type="ChEBI" id="CHEBI:15378"/>
        <dbReference type="ChEBI" id="CHEBI:30013"/>
        <dbReference type="ChEBI" id="CHEBI:57683"/>
        <dbReference type="ChEBI" id="CHEBI:58211"/>
        <dbReference type="ChEBI" id="CHEBI:137323"/>
        <dbReference type="EC" id="2.4.1.109"/>
    </reaction>
</comment>
<comment type="pathway">
    <text evidence="14">Protein modification; protein glycosylation.</text>
</comment>
<comment type="subunit">
    <text evidence="2">Forms a functional homodimer.</text>
</comment>
<comment type="subcellular location">
    <subcellularLocation>
        <location evidence="2">Endoplasmic reticulum membrane</location>
        <topology evidence="3">Multi-pass membrane protein</topology>
    </subcellularLocation>
</comment>
<comment type="induction">
    <text evidence="8 11 12">Transcribed in the yeast form, but expression is increased two to threefold during hyphal induction. Also up-regulated more than twofold when PMT1 expression is impaired. MSB2 functions not only to secure basal levels of the PMT4 transcripts but is needed also for up-regulation of both transcripts upon PMT1 inhibition. Repressed by BCR1.</text>
</comment>
<comment type="disruption phenotype">
    <text evidence="9 10">Impairs biofilm formation and shows reduced virulence in a mouse model of hematogenously disseminated candidiasis (HDC) and using reconstituted human epithelium (RHE).</text>
</comment>
<comment type="similarity">
    <text evidence="14">Belongs to the glycosyltransferase 39 family.</text>
</comment>
<feature type="chain" id="PRO_0000430578" description="Dolichyl-phosphate-mannose--protein mannosyltransferase 4">
    <location>
        <begin position="1"/>
        <end position="755"/>
    </location>
</feature>
<feature type="transmembrane region" description="Helical; Name=1" evidence="3">
    <location>
        <begin position="92"/>
        <end position="112"/>
    </location>
</feature>
<feature type="transmembrane region" description="Helical; Name=2" evidence="3">
    <location>
        <begin position="147"/>
        <end position="167"/>
    </location>
</feature>
<feature type="transmembrane region" description="Helical; Name=3" evidence="3">
    <location>
        <begin position="185"/>
        <end position="205"/>
    </location>
</feature>
<feature type="transmembrane region" description="Helical; Name=4" evidence="3">
    <location>
        <begin position="212"/>
        <end position="232"/>
    </location>
</feature>
<feature type="transmembrane region" description="Helical; Name=5" evidence="3">
    <location>
        <begin position="237"/>
        <end position="257"/>
    </location>
</feature>
<feature type="transmembrane region" description="Helical; Name=6" evidence="3">
    <location>
        <begin position="278"/>
        <end position="298"/>
    </location>
</feature>
<feature type="transmembrane region" description="Helical; Name=7" evidence="3">
    <location>
        <begin position="595"/>
        <end position="615"/>
    </location>
</feature>
<feature type="transmembrane region" description="Helical; Name=8" evidence="3">
    <location>
        <begin position="640"/>
        <end position="660"/>
    </location>
</feature>
<feature type="transmembrane region" description="Helical; Name=9" evidence="3">
    <location>
        <begin position="670"/>
        <end position="690"/>
    </location>
</feature>
<feature type="transmembrane region" description="Helical; Name=10" evidence="3">
    <location>
        <begin position="706"/>
        <end position="726"/>
    </location>
</feature>
<feature type="domain" description="MIR 1" evidence="4">
    <location>
        <begin position="325"/>
        <end position="389"/>
    </location>
</feature>
<feature type="domain" description="MIR 2" evidence="4">
    <location>
        <begin position="396"/>
        <end position="454"/>
    </location>
</feature>
<feature type="domain" description="MIR 3" evidence="4">
    <location>
        <begin position="466"/>
        <end position="523"/>
    </location>
</feature>
<feature type="region of interest" description="Disordered" evidence="6">
    <location>
        <begin position="1"/>
        <end position="23"/>
    </location>
</feature>
<feature type="compositionally biased region" description="Polar residues" evidence="6">
    <location>
        <begin position="13"/>
        <end position="23"/>
    </location>
</feature>
<feature type="glycosylation site" description="N-linked (GlcNAc...) asparagine" evidence="5">
    <location>
        <position position="11"/>
    </location>
</feature>
<feature type="glycosylation site" description="N-linked (GlcNAc...) asparagine" evidence="5">
    <location>
        <position position="445"/>
    </location>
</feature>
<feature type="glycosylation site" description="N-linked (GlcNAc...) asparagine" evidence="5">
    <location>
        <position position="691"/>
    </location>
</feature>
<gene>
    <name evidence="13" type="primary">PMT4</name>
    <name type="ordered locus">CAALFM_C206100WA</name>
    <name type="ORF">CaO19.11590</name>
    <name type="ORF">CaO19.4109</name>
</gene>
<sequence length="755" mass="86658">MSQTLKKRGGNSSGRKSPTTSNIEFDDKKTEFDLNAIVPPKEPEYKYLAALTLVTLLAIYTRFTKLGTPNKVVFDEVHFGKFASYYLERTYFFDLHPPFAKLLIAFVGWLIGYDGKFKFEAIGDSYIENNVPYIAYRSLSAIQGAAIVPIMFLTMKTLGFSVAACLFSSIIVCFDNAQVTDSRLILLDATLILSVALTIFSYSKFSTFRKQSFSSKWWTWLLATGVSLSCVISTKYVGVFTYLTIGIAVIHELWILLDYRKGLTLQEFAKHFFARLWALIIVPFCIYLYWFYLHFAILTRSGPGDAFMSSEFQETLLESPLAAHSKPVQYFDQITIKHKDTGAFLHSHQHEYPLRYEDGRISSNGQQVTCVVQENAANDPNNQWEIVPTSEGANKGTKVYTNDIVRFRHVGTGGYLLTHDVASPLKPTNEEFTVVYDDVAQQRYNETLFRLRLHVPGSNPKKEKNKKEIKTLATDLRILHVDTVVAMWTHNDELLPEWAFNQQEVSGNKKIPDKDNIWNFDLITNLQSTDPRNQYVPKKVKTLPFLRKWWELQMLMFHHNNQLSSEHPFATQPGEWPLALSGVSFYNDNTEKKQIFFIGNIIGFWLEVCFLSIYIGILLADQITRRRNVHVLSDRARSRLYNTLGFLFVGWAAHYLPFFLMNRQKFLHHYLPAHLVAALFSGGLVEFICSNNSARPNGKPVGVNKYKIIAVVAACSTAIIWFFFYFRPLTYGDVYLTPEEVKARQWLDIKLHYGK</sequence>
<proteinExistence type="evidence at transcript level"/>
<accession>Q59X23</accession>
<accession>A0A1D8PHJ9</accession>
<organism>
    <name type="scientific">Candida albicans (strain SC5314 / ATCC MYA-2876)</name>
    <name type="common">Yeast</name>
    <dbReference type="NCBI Taxonomy" id="237561"/>
    <lineage>
        <taxon>Eukaryota</taxon>
        <taxon>Fungi</taxon>
        <taxon>Dikarya</taxon>
        <taxon>Ascomycota</taxon>
        <taxon>Saccharomycotina</taxon>
        <taxon>Pichiomycetes</taxon>
        <taxon>Debaryomycetaceae</taxon>
        <taxon>Candida/Lodderomyces clade</taxon>
        <taxon>Candida</taxon>
    </lineage>
</organism>
<keyword id="KW-0256">Endoplasmic reticulum</keyword>
<keyword id="KW-0325">Glycoprotein</keyword>
<keyword id="KW-0328">Glycosyltransferase</keyword>
<keyword id="KW-0472">Membrane</keyword>
<keyword id="KW-1185">Reference proteome</keyword>
<keyword id="KW-0677">Repeat</keyword>
<keyword id="KW-0808">Transferase</keyword>
<keyword id="KW-0812">Transmembrane</keyword>
<keyword id="KW-1133">Transmembrane helix</keyword>
<name>PMT4_CANAL</name>
<protein>
    <recommendedName>
        <fullName evidence="14">Dolichyl-phosphate-mannose--protein mannosyltransferase 4</fullName>
        <shortName>Protein mannosyltransferase 4</shortName>
        <ecNumber evidence="1 13">2.4.1.109</ecNumber>
    </recommendedName>
</protein>
<dbReference type="EC" id="2.4.1.109" evidence="1 13"/>
<dbReference type="EMBL" id="CP017624">
    <property type="protein sequence ID" value="AOW27618.1"/>
    <property type="molecule type" value="Genomic_DNA"/>
</dbReference>
<dbReference type="RefSeq" id="XP_714280.2">
    <property type="nucleotide sequence ID" value="XM_709187.2"/>
</dbReference>
<dbReference type="SMR" id="Q59X23"/>
<dbReference type="FunCoup" id="Q59X23">
    <property type="interactions" value="553"/>
</dbReference>
<dbReference type="STRING" id="237561.Q59X23"/>
<dbReference type="GlyCosmos" id="Q59X23">
    <property type="glycosylation" value="3 sites, No reported glycans"/>
</dbReference>
<dbReference type="EnsemblFungi" id="C2_06100W_A-T">
    <property type="protein sequence ID" value="C2_06100W_A-T-p1"/>
    <property type="gene ID" value="C2_06100W_A"/>
</dbReference>
<dbReference type="GeneID" id="3644096"/>
<dbReference type="KEGG" id="cal:CAALFM_C206100WA"/>
<dbReference type="CGD" id="CAL0000192933">
    <property type="gene designation" value="PMT4"/>
</dbReference>
<dbReference type="VEuPathDB" id="FungiDB:C2_06100W_A"/>
<dbReference type="eggNOG" id="KOG3359">
    <property type="taxonomic scope" value="Eukaryota"/>
</dbReference>
<dbReference type="HOGENOM" id="CLU_008438_0_0_1"/>
<dbReference type="InParanoid" id="Q59X23"/>
<dbReference type="OMA" id="NCHLNAP"/>
<dbReference type="OrthoDB" id="292747at2759"/>
<dbReference type="BRENDA" id="2.4.1.109">
    <property type="organism ID" value="1096"/>
</dbReference>
<dbReference type="UniPathway" id="UPA00378"/>
<dbReference type="PHI-base" id="PHI:399"/>
<dbReference type="PRO" id="PR:Q59X23"/>
<dbReference type="Proteomes" id="UP000000559">
    <property type="component" value="Chromosome 2"/>
</dbReference>
<dbReference type="GO" id="GO:0097586">
    <property type="term" value="C:dolichyl-phosphate-mannose-protein mannosyltransferase Pmt4p homodimer complex"/>
    <property type="evidence" value="ECO:0007669"/>
    <property type="project" value="EnsemblFungi"/>
</dbReference>
<dbReference type="GO" id="GO:0005783">
    <property type="term" value="C:endoplasmic reticulum"/>
    <property type="evidence" value="ECO:0000318"/>
    <property type="project" value="GO_Central"/>
</dbReference>
<dbReference type="GO" id="GO:0005886">
    <property type="term" value="C:plasma membrane"/>
    <property type="evidence" value="ECO:0000314"/>
    <property type="project" value="CGD"/>
</dbReference>
<dbReference type="GO" id="GO:0004169">
    <property type="term" value="F:dolichyl-phosphate-mannose-protein mannosyltransferase activity"/>
    <property type="evidence" value="ECO:0000318"/>
    <property type="project" value="GO_Central"/>
</dbReference>
<dbReference type="GO" id="GO:0042802">
    <property type="term" value="F:identical protein binding"/>
    <property type="evidence" value="ECO:0007669"/>
    <property type="project" value="EnsemblFungi"/>
</dbReference>
<dbReference type="GO" id="GO:0000030">
    <property type="term" value="F:mannosyltransferase activity"/>
    <property type="evidence" value="ECO:0000315"/>
    <property type="project" value="CGD"/>
</dbReference>
<dbReference type="GO" id="GO:0036244">
    <property type="term" value="P:cellular response to neutral pH"/>
    <property type="evidence" value="ECO:0000315"/>
    <property type="project" value="CGD"/>
</dbReference>
<dbReference type="GO" id="GO:0030447">
    <property type="term" value="P:filamentous growth"/>
    <property type="evidence" value="ECO:0000315"/>
    <property type="project" value="CGD"/>
</dbReference>
<dbReference type="GO" id="GO:0044182">
    <property type="term" value="P:filamentous growth of a population of unicellular organisms"/>
    <property type="evidence" value="ECO:0000315"/>
    <property type="project" value="CGD"/>
</dbReference>
<dbReference type="GO" id="GO:0036178">
    <property type="term" value="P:filamentous growth of a population of unicellular organisms in response to neutral pH"/>
    <property type="evidence" value="ECO:0000315"/>
    <property type="project" value="CGD"/>
</dbReference>
<dbReference type="GO" id="GO:0031505">
    <property type="term" value="P:fungal-type cell wall organization"/>
    <property type="evidence" value="ECO:0000315"/>
    <property type="project" value="CGD"/>
</dbReference>
<dbReference type="GO" id="GO:0045861">
    <property type="term" value="P:negative regulation of proteolysis"/>
    <property type="evidence" value="ECO:0000315"/>
    <property type="project" value="CGD"/>
</dbReference>
<dbReference type="GO" id="GO:0035269">
    <property type="term" value="P:protein O-linked mannosylation"/>
    <property type="evidence" value="ECO:0000315"/>
    <property type="project" value="CGD"/>
</dbReference>
<dbReference type="GO" id="GO:1900101">
    <property type="term" value="P:regulation of endoplasmic reticulum unfolded protein response"/>
    <property type="evidence" value="ECO:0007669"/>
    <property type="project" value="EnsemblFungi"/>
</dbReference>
<dbReference type="GO" id="GO:0044011">
    <property type="term" value="P:single-species biofilm formation on inanimate substrate"/>
    <property type="evidence" value="ECO:0000315"/>
    <property type="project" value="CGD"/>
</dbReference>
<dbReference type="CDD" id="cd23285">
    <property type="entry name" value="beta-trefoil_MIR_PMT4-like"/>
    <property type="match status" value="1"/>
</dbReference>
<dbReference type="FunFam" id="2.80.10.50:FF:000044">
    <property type="entry name" value="Dolichyl-phosphate-mannose-protein mannosyltransferase 4"/>
    <property type="match status" value="1"/>
</dbReference>
<dbReference type="Gene3D" id="2.80.10.50">
    <property type="match status" value="1"/>
</dbReference>
<dbReference type="InterPro" id="IPR027005">
    <property type="entry name" value="GlyclTrfase_39-like"/>
</dbReference>
<dbReference type="InterPro" id="IPR003342">
    <property type="entry name" value="Glyco_trans_39/83"/>
</dbReference>
<dbReference type="InterPro" id="IPR036300">
    <property type="entry name" value="MIR_dom_sf"/>
</dbReference>
<dbReference type="InterPro" id="IPR016093">
    <property type="entry name" value="MIR_motif"/>
</dbReference>
<dbReference type="InterPro" id="IPR032421">
    <property type="entry name" value="PMT_4TMC"/>
</dbReference>
<dbReference type="PANTHER" id="PTHR10050">
    <property type="entry name" value="DOLICHYL-PHOSPHATE-MANNOSE--PROTEIN MANNOSYLTRANSFERASE"/>
    <property type="match status" value="1"/>
</dbReference>
<dbReference type="PANTHER" id="PTHR10050:SF51">
    <property type="entry name" value="PROTEIN O-MANNOSYL-TRANSFERASE 1"/>
    <property type="match status" value="1"/>
</dbReference>
<dbReference type="Pfam" id="PF02815">
    <property type="entry name" value="MIR"/>
    <property type="match status" value="1"/>
</dbReference>
<dbReference type="Pfam" id="PF02366">
    <property type="entry name" value="PMT"/>
    <property type="match status" value="1"/>
</dbReference>
<dbReference type="Pfam" id="PF16192">
    <property type="entry name" value="PMT_4TMC"/>
    <property type="match status" value="1"/>
</dbReference>
<dbReference type="SMART" id="SM00472">
    <property type="entry name" value="MIR"/>
    <property type="match status" value="3"/>
</dbReference>
<dbReference type="SUPFAM" id="SSF82109">
    <property type="entry name" value="MIR domain"/>
    <property type="match status" value="1"/>
</dbReference>
<dbReference type="PROSITE" id="PS50919">
    <property type="entry name" value="MIR"/>
    <property type="match status" value="3"/>
</dbReference>